<gene>
    <name type="primary">CCR10</name>
    <name type="synonym">GPR2</name>
</gene>
<accession>P46092</accession>
<accession>Q4V749</accession>
<accession>Q6T7X2</accession>
<accession>Q9NZG2</accession>
<feature type="chain" id="PRO_0000069293" description="C-C chemokine receptor type 10">
    <location>
        <begin position="1"/>
        <end position="362"/>
    </location>
</feature>
<feature type="topological domain" description="Extracellular" evidence="1">
    <location>
        <begin position="1"/>
        <end position="52"/>
    </location>
</feature>
<feature type="transmembrane region" description="Helical; Name=1" evidence="1">
    <location>
        <begin position="53"/>
        <end position="68"/>
    </location>
</feature>
<feature type="topological domain" description="Cytoplasmic" evidence="1">
    <location>
        <begin position="69"/>
        <end position="78"/>
    </location>
</feature>
<feature type="transmembrane region" description="Helical; Name=2" evidence="1">
    <location>
        <begin position="79"/>
        <end position="99"/>
    </location>
</feature>
<feature type="topological domain" description="Extracellular" evidence="1">
    <location>
        <begin position="100"/>
        <end position="114"/>
    </location>
</feature>
<feature type="transmembrane region" description="Helical; Name=3" evidence="1">
    <location>
        <begin position="115"/>
        <end position="136"/>
    </location>
</feature>
<feature type="topological domain" description="Cytoplasmic" evidence="1">
    <location>
        <begin position="137"/>
        <end position="159"/>
    </location>
</feature>
<feature type="transmembrane region" description="Helical; Name=4" evidence="1">
    <location>
        <begin position="160"/>
        <end position="179"/>
    </location>
</feature>
<feature type="topological domain" description="Extracellular" evidence="1">
    <location>
        <begin position="180"/>
        <end position="203"/>
    </location>
</feature>
<feature type="transmembrane region" description="Helical; Name=5" evidence="1">
    <location>
        <begin position="204"/>
        <end position="225"/>
    </location>
</feature>
<feature type="topological domain" description="Cytoplasmic" evidence="1">
    <location>
        <begin position="226"/>
        <end position="247"/>
    </location>
</feature>
<feature type="transmembrane region" description="Helical; Name=6" evidence="1">
    <location>
        <begin position="248"/>
        <end position="269"/>
    </location>
</feature>
<feature type="topological domain" description="Extracellular" evidence="1">
    <location>
        <begin position="270"/>
        <end position="290"/>
    </location>
</feature>
<feature type="transmembrane region" description="Helical; Name=7" evidence="1">
    <location>
        <begin position="291"/>
        <end position="313"/>
    </location>
</feature>
<feature type="topological domain" description="Cytoplasmic" evidence="1">
    <location>
        <begin position="314"/>
        <end position="362"/>
    </location>
</feature>
<feature type="region of interest" description="Disordered" evidence="3">
    <location>
        <begin position="328"/>
        <end position="362"/>
    </location>
</feature>
<feature type="compositionally biased region" description="Low complexity" evidence="3">
    <location>
        <begin position="328"/>
        <end position="338"/>
    </location>
</feature>
<feature type="compositionally biased region" description="Polar residues" evidence="3">
    <location>
        <begin position="351"/>
        <end position="362"/>
    </location>
</feature>
<feature type="disulfide bond" evidence="2">
    <location>
        <begin position="113"/>
        <end position="191"/>
    </location>
</feature>
<feature type="sequence conflict" description="In Ref. 5; AAA64593." evidence="5" ref="5">
    <original>V</original>
    <variation>L</variation>
    <location>
        <position position="51"/>
    </location>
</feature>
<feature type="sequence conflict" description="In Ref. 2; AAF72871." evidence="5" ref="2">
    <location>
        <position position="235"/>
    </location>
</feature>
<feature type="sequence conflict" description="In Ref. 1 and 5." evidence="5" ref="1 5">
    <original>C</original>
    <variation>S</variation>
    <location>
        <position position="330"/>
    </location>
</feature>
<proteinExistence type="evidence at protein level"/>
<evidence type="ECO:0000255" key="1"/>
<evidence type="ECO:0000255" key="2">
    <source>
        <dbReference type="PROSITE-ProRule" id="PRU00521"/>
    </source>
</evidence>
<evidence type="ECO:0000256" key="3">
    <source>
        <dbReference type="SAM" id="MobiDB-lite"/>
    </source>
</evidence>
<evidence type="ECO:0000269" key="4">
    <source>
    </source>
</evidence>
<evidence type="ECO:0000305" key="5"/>
<keyword id="KW-1003">Cell membrane</keyword>
<keyword id="KW-1015">Disulfide bond</keyword>
<keyword id="KW-0297">G-protein coupled receptor</keyword>
<keyword id="KW-0472">Membrane</keyword>
<keyword id="KW-1267">Proteomics identification</keyword>
<keyword id="KW-0675">Receptor</keyword>
<keyword id="KW-1185">Reference proteome</keyword>
<keyword id="KW-0807">Transducer</keyword>
<keyword id="KW-0812">Transmembrane</keyword>
<keyword id="KW-1133">Transmembrane helix</keyword>
<protein>
    <recommendedName>
        <fullName>C-C chemokine receptor type 10</fullName>
        <shortName>C-C CKR-10</shortName>
        <shortName>CC-CKR-10</shortName>
        <shortName>CCR-10</shortName>
    </recommendedName>
    <alternativeName>
        <fullName>G-protein coupled receptor 2</fullName>
    </alternativeName>
</protein>
<sequence>MGTEATEQVSWGHYSGDEEDAYSAEPLPELCYKADVQAFSRAFQPSVSLTVAALGLAGNGLVLATHLAARRAARSPTSAHLLQLALADLLLALTLPFAAAGALQGWSLGSATCRTISGLYSASFHAGFLFLACISADRYVAIARALPAGPRPSTPGRAHLVSVIVWLLSLLLALPALLFSQDGQREGQRRCRLIFPEGLTQTVKGASAVAQVALGFALPLGVMVACYALLGRTLLAARGPERRRALRVVVALVAAFVVLQLPYSLALLLDTADLLAARERSCPASKRKDVALLVTSGLALARCGLNPVLYAFLGLRFRQDLRRLLRGGSCPSGPQPRRGCPRRPRLSSCSAPTETHSLSWDN</sequence>
<comment type="function">
    <text>Receptor for chemokines SCYA27 and SCYA28. Subsequently transduces a signal by increasing the intracellular calcium ions level and stimulates chemotaxis in a pre-B cell line.</text>
</comment>
<comment type="interaction">
    <interactant intactId="EBI-348022">
        <id>P46092</id>
    </interactant>
    <interactant intactId="EBI-351829">
        <id>O15145</id>
        <label>ARPC3</label>
    </interactant>
    <organismsDiffer>false</organismsDiffer>
    <experiments>3</experiments>
</comment>
<comment type="interaction">
    <interactant intactId="EBI-348022">
        <id>P46092</id>
    </interactant>
    <interactant intactId="EBI-717048">
        <id>P60903</id>
        <label>S100A10</label>
    </interactant>
    <organismsDiffer>false</organismsDiffer>
    <experiments>5</experiments>
</comment>
<comment type="subcellular location">
    <subcellularLocation>
        <location>Cell membrane</location>
        <topology>Multi-pass membrane protein</topology>
    </subcellularLocation>
</comment>
<comment type="tissue specificity">
    <text evidence="4">Expressed at high levels in adult testis, small intestine, fetal lung, fetal kidney. Weaker expression was observed in many other adult tissues including spleen, thymus, lymph node, Peyer patches, colon, heart, ovary, peripheral blood lymphocytes, thyroid and spinal cord. Also expressed by melanocytes, dermal fibroblasts, dermal microvascular endothelial cells. Also detected in T-cells and in skin-derived Langerhans cells.</text>
</comment>
<comment type="similarity">
    <text evidence="2">Belongs to the G-protein coupled receptor 1 family.</text>
</comment>
<comment type="online information" name="Wikipedia">
    <link uri="https://en.wikipedia.org/wiki/CC_chemokine_receptors"/>
    <text>CC chemokine receptors entry</text>
</comment>
<organism>
    <name type="scientific">Homo sapiens</name>
    <name type="common">Human</name>
    <dbReference type="NCBI Taxonomy" id="9606"/>
    <lineage>
        <taxon>Eukaryota</taxon>
        <taxon>Metazoa</taxon>
        <taxon>Chordata</taxon>
        <taxon>Craniata</taxon>
        <taxon>Vertebrata</taxon>
        <taxon>Euteleostomi</taxon>
        <taxon>Mammalia</taxon>
        <taxon>Eutheria</taxon>
        <taxon>Euarchontoglires</taxon>
        <taxon>Primates</taxon>
        <taxon>Haplorrhini</taxon>
        <taxon>Catarrhini</taxon>
        <taxon>Hominidae</taxon>
        <taxon>Homo</taxon>
    </lineage>
</organism>
<name>CCR10_HUMAN</name>
<dbReference type="EMBL" id="AF215981">
    <property type="protein sequence ID" value="AAF63709.1"/>
    <property type="molecule type" value="mRNA"/>
</dbReference>
<dbReference type="EMBL" id="AF208237">
    <property type="protein sequence ID" value="AAF72871.1"/>
    <property type="molecule type" value="mRNA"/>
</dbReference>
<dbReference type="EMBL" id="AY429103">
    <property type="protein sequence ID" value="AAR07898.1"/>
    <property type="molecule type" value="mRNA"/>
</dbReference>
<dbReference type="EMBL" id="BC098132">
    <property type="protein sequence ID" value="AAH98132.1"/>
    <property type="molecule type" value="mRNA"/>
</dbReference>
<dbReference type="EMBL" id="BC098157">
    <property type="protein sequence ID" value="AAH98157.1"/>
    <property type="molecule type" value="mRNA"/>
</dbReference>
<dbReference type="EMBL" id="BC098304">
    <property type="protein sequence ID" value="AAH98304.1"/>
    <property type="molecule type" value="mRNA"/>
</dbReference>
<dbReference type="EMBL" id="BC099840">
    <property type="protein sequence ID" value="AAH99840.1"/>
    <property type="molecule type" value="mRNA"/>
</dbReference>
<dbReference type="EMBL" id="U13667">
    <property type="protein sequence ID" value="AAA64593.1"/>
    <property type="molecule type" value="Genomic_DNA"/>
</dbReference>
<dbReference type="CCDS" id="CCDS11435.1"/>
<dbReference type="PIR" id="B55733">
    <property type="entry name" value="B55733"/>
</dbReference>
<dbReference type="RefSeq" id="NP_057686.2">
    <property type="nucleotide sequence ID" value="NM_016602.3"/>
</dbReference>
<dbReference type="SMR" id="P46092"/>
<dbReference type="BioGRID" id="109087">
    <property type="interactions" value="3"/>
</dbReference>
<dbReference type="DIP" id="DIP-5873N"/>
<dbReference type="FunCoup" id="P46092">
    <property type="interactions" value="745"/>
</dbReference>
<dbReference type="IntAct" id="P46092">
    <property type="interactions" value="10"/>
</dbReference>
<dbReference type="STRING" id="9606.ENSP00000332504"/>
<dbReference type="BindingDB" id="P46092"/>
<dbReference type="ChEMBL" id="CHEMBL2321628"/>
<dbReference type="GuidetoPHARMACOLOGY" id="67"/>
<dbReference type="GlyGen" id="P46092">
    <property type="glycosylation" value="1 site"/>
</dbReference>
<dbReference type="iPTMnet" id="P46092"/>
<dbReference type="PhosphoSitePlus" id="P46092"/>
<dbReference type="BioMuta" id="CCR10"/>
<dbReference type="DMDM" id="62298314"/>
<dbReference type="MassIVE" id="P46092"/>
<dbReference type="PaxDb" id="9606-ENSP00000332504"/>
<dbReference type="PeptideAtlas" id="P46092"/>
<dbReference type="ProteomicsDB" id="55718"/>
<dbReference type="Antibodypedia" id="3185">
    <property type="antibodies" value="414 antibodies from 36 providers"/>
</dbReference>
<dbReference type="DNASU" id="2826"/>
<dbReference type="Ensembl" id="ENST00000332438.4">
    <property type="protein sequence ID" value="ENSP00000332504.4"/>
    <property type="gene ID" value="ENSG00000184451.5"/>
</dbReference>
<dbReference type="GeneID" id="2826"/>
<dbReference type="KEGG" id="hsa:2826"/>
<dbReference type="MANE-Select" id="ENST00000332438.4">
    <property type="protein sequence ID" value="ENSP00000332504.4"/>
    <property type="RefSeq nucleotide sequence ID" value="NM_016602.3"/>
    <property type="RefSeq protein sequence ID" value="NP_057686.2"/>
</dbReference>
<dbReference type="UCSC" id="uc002iax.5">
    <property type="organism name" value="human"/>
</dbReference>
<dbReference type="AGR" id="HGNC:4474"/>
<dbReference type="CTD" id="2826"/>
<dbReference type="DisGeNET" id="2826"/>
<dbReference type="GeneCards" id="CCR10"/>
<dbReference type="HGNC" id="HGNC:4474">
    <property type="gene designation" value="CCR10"/>
</dbReference>
<dbReference type="HPA" id="ENSG00000184451">
    <property type="expression patterns" value="Tissue enhanced (pituitary)"/>
</dbReference>
<dbReference type="MIM" id="600240">
    <property type="type" value="gene"/>
</dbReference>
<dbReference type="neXtProt" id="NX_P46092"/>
<dbReference type="OpenTargets" id="ENSG00000184451"/>
<dbReference type="PharmGKB" id="PA28862"/>
<dbReference type="VEuPathDB" id="HostDB:ENSG00000184451"/>
<dbReference type="eggNOG" id="KOG3656">
    <property type="taxonomic scope" value="Eukaryota"/>
</dbReference>
<dbReference type="GeneTree" id="ENSGT01030000234667"/>
<dbReference type="HOGENOM" id="CLU_009579_8_3_1"/>
<dbReference type="InParanoid" id="P46092"/>
<dbReference type="OMA" id="PNPRGRC"/>
<dbReference type="OrthoDB" id="8957211at2759"/>
<dbReference type="PAN-GO" id="P46092">
    <property type="GO annotations" value="7 GO annotations based on evolutionary models"/>
</dbReference>
<dbReference type="PhylomeDB" id="P46092"/>
<dbReference type="TreeFam" id="TF330966"/>
<dbReference type="PathwayCommons" id="P46092"/>
<dbReference type="Reactome" id="R-HSA-380108">
    <property type="pathway name" value="Chemokine receptors bind chemokines"/>
</dbReference>
<dbReference type="Reactome" id="R-HSA-418594">
    <property type="pathway name" value="G alpha (i) signalling events"/>
</dbReference>
<dbReference type="SignaLink" id="P46092"/>
<dbReference type="BioGRID-ORCS" id="2826">
    <property type="hits" value="18 hits in 1155 CRISPR screens"/>
</dbReference>
<dbReference type="ChiTaRS" id="CCR10">
    <property type="organism name" value="human"/>
</dbReference>
<dbReference type="GeneWiki" id="CCR10"/>
<dbReference type="GenomeRNAi" id="2826"/>
<dbReference type="Pharos" id="P46092">
    <property type="development level" value="Tchem"/>
</dbReference>
<dbReference type="PRO" id="PR:P46092"/>
<dbReference type="Proteomes" id="UP000005640">
    <property type="component" value="Chromosome 17"/>
</dbReference>
<dbReference type="RNAct" id="P46092">
    <property type="molecule type" value="protein"/>
</dbReference>
<dbReference type="Bgee" id="ENSG00000184451">
    <property type="expression patterns" value="Expressed in sural nerve and 107 other cell types or tissues"/>
</dbReference>
<dbReference type="ExpressionAtlas" id="P46092">
    <property type="expression patterns" value="baseline and differential"/>
</dbReference>
<dbReference type="GO" id="GO:0009986">
    <property type="term" value="C:cell surface"/>
    <property type="evidence" value="ECO:0000314"/>
    <property type="project" value="UniProtKB"/>
</dbReference>
<dbReference type="GO" id="GO:0005783">
    <property type="term" value="C:endoplasmic reticulum"/>
    <property type="evidence" value="ECO:0000314"/>
    <property type="project" value="HPA"/>
</dbReference>
<dbReference type="GO" id="GO:0009897">
    <property type="term" value="C:external side of plasma membrane"/>
    <property type="evidence" value="ECO:0000318"/>
    <property type="project" value="GO_Central"/>
</dbReference>
<dbReference type="GO" id="GO:0005886">
    <property type="term" value="C:plasma membrane"/>
    <property type="evidence" value="ECO:0000304"/>
    <property type="project" value="Reactome"/>
</dbReference>
<dbReference type="GO" id="GO:0019957">
    <property type="term" value="F:C-C chemokine binding"/>
    <property type="evidence" value="ECO:0000318"/>
    <property type="project" value="GO_Central"/>
</dbReference>
<dbReference type="GO" id="GO:0016493">
    <property type="term" value="F:C-C chemokine receptor activity"/>
    <property type="evidence" value="ECO:0000318"/>
    <property type="project" value="GO_Central"/>
</dbReference>
<dbReference type="GO" id="GO:0004930">
    <property type="term" value="F:G protein-coupled receptor activity"/>
    <property type="evidence" value="ECO:0000304"/>
    <property type="project" value="ProtInc"/>
</dbReference>
<dbReference type="GO" id="GO:0019722">
    <property type="term" value="P:calcium-mediated signaling"/>
    <property type="evidence" value="ECO:0000318"/>
    <property type="project" value="GO_Central"/>
</dbReference>
<dbReference type="GO" id="GO:0060326">
    <property type="term" value="P:cell chemotaxis"/>
    <property type="evidence" value="ECO:0000318"/>
    <property type="project" value="GO_Central"/>
</dbReference>
<dbReference type="GO" id="GO:0007186">
    <property type="term" value="P:G protein-coupled receptor signaling pathway"/>
    <property type="evidence" value="ECO:0000304"/>
    <property type="project" value="ProtInc"/>
</dbReference>
<dbReference type="GO" id="GO:0006955">
    <property type="term" value="P:immune response"/>
    <property type="evidence" value="ECO:0000318"/>
    <property type="project" value="GO_Central"/>
</dbReference>
<dbReference type="GO" id="GO:0007204">
    <property type="term" value="P:positive regulation of cytosolic calcium ion concentration"/>
    <property type="evidence" value="ECO:0000318"/>
    <property type="project" value="GO_Central"/>
</dbReference>
<dbReference type="FunFam" id="1.20.1070.10:FF:000184">
    <property type="entry name" value="C-C chemokine receptor type 10"/>
    <property type="match status" value="1"/>
</dbReference>
<dbReference type="Gene3D" id="1.20.1070.10">
    <property type="entry name" value="Rhodopsin 7-helix transmembrane proteins"/>
    <property type="match status" value="1"/>
</dbReference>
<dbReference type="InterPro" id="IPR050119">
    <property type="entry name" value="CCR1-9-like"/>
</dbReference>
<dbReference type="InterPro" id="IPR005382">
    <property type="entry name" value="Chemokine_CCR10"/>
</dbReference>
<dbReference type="InterPro" id="IPR000355">
    <property type="entry name" value="Chemokine_rcpt"/>
</dbReference>
<dbReference type="InterPro" id="IPR000276">
    <property type="entry name" value="GPCR_Rhodpsn"/>
</dbReference>
<dbReference type="InterPro" id="IPR017452">
    <property type="entry name" value="GPCR_Rhodpsn_7TM"/>
</dbReference>
<dbReference type="PANTHER" id="PTHR10489:SF735">
    <property type="entry name" value="C-C CHEMOKINE RECEPTOR TYPE 10"/>
    <property type="match status" value="1"/>
</dbReference>
<dbReference type="PANTHER" id="PTHR10489">
    <property type="entry name" value="CELL ADHESION MOLECULE"/>
    <property type="match status" value="1"/>
</dbReference>
<dbReference type="Pfam" id="PF00001">
    <property type="entry name" value="7tm_1"/>
    <property type="match status" value="1"/>
</dbReference>
<dbReference type="PRINTS" id="PR00657">
    <property type="entry name" value="CCCHEMOKINER"/>
</dbReference>
<dbReference type="PRINTS" id="PR01557">
    <property type="entry name" value="CHEMOKINER10"/>
</dbReference>
<dbReference type="PRINTS" id="PR00237">
    <property type="entry name" value="GPCRRHODOPSN"/>
</dbReference>
<dbReference type="SUPFAM" id="SSF81321">
    <property type="entry name" value="Family A G protein-coupled receptor-like"/>
    <property type="match status" value="1"/>
</dbReference>
<dbReference type="PROSITE" id="PS00237">
    <property type="entry name" value="G_PROTEIN_RECEP_F1_1"/>
    <property type="match status" value="1"/>
</dbReference>
<dbReference type="PROSITE" id="PS50262">
    <property type="entry name" value="G_PROTEIN_RECEP_F1_2"/>
    <property type="match status" value="1"/>
</dbReference>
<reference key="1">
    <citation type="journal article" date="2000" name="J. Immunol.">
        <title>Identification of the orphan receptor G-protein-coupled receptor 2 as CCR10, a specific receptor for the chemokine ESkine.</title>
        <authorList>
            <person name="Jarmin D.I."/>
            <person name="Rits M."/>
            <person name="Bota D."/>
            <person name="Gerard N.P."/>
            <person name="Graham G.J."/>
            <person name="Clark-Lewis I."/>
            <person name="Gerard C."/>
        </authorList>
    </citation>
    <scope>NUCLEOTIDE SEQUENCE [MRNA]</scope>
    <scope>CHARACTERIZATION</scope>
</reference>
<reference key="2">
    <citation type="journal article" date="2000" name="J. Immunol.">
        <title>The orphan chemokine receptor G protein-coupled receptor-2 (GPR-2, CCR10) binds the skin-associated chemokine CCL27 (CTACK/ALP/ILC).</title>
        <authorList>
            <person name="Homey B."/>
            <person name="Wang W."/>
            <person name="Soto H."/>
            <person name="Buchanan M.E."/>
            <person name="Wiesenborn A."/>
            <person name="Catron D."/>
            <person name="Muller A."/>
            <person name="McClanahan T.K."/>
            <person name="Dieu-Nosjean M.C."/>
            <person name="Orozco R."/>
            <person name="Ruzicka T."/>
            <person name="Lehmann P."/>
            <person name="Oldham E."/>
            <person name="Zlotnik A."/>
        </authorList>
    </citation>
    <scope>NUCLEOTIDE SEQUENCE [MRNA]</scope>
    <scope>CHARACTERIZATION</scope>
</reference>
<reference key="3">
    <citation type="submission" date="2003-10" db="EMBL/GenBank/DDBJ databases">
        <title>cDNA clones of human proteins involved in signal transduction sequenced by the Guthrie cDNA resource center (www.cdna.org).</title>
        <authorList>
            <person name="Kopatz S.A."/>
            <person name="Aronstam R.S."/>
            <person name="Sharma S.V."/>
        </authorList>
    </citation>
    <scope>NUCLEOTIDE SEQUENCE [LARGE SCALE MRNA]</scope>
</reference>
<reference key="4">
    <citation type="journal article" date="2004" name="Genome Res.">
        <title>The status, quality, and expansion of the NIH full-length cDNA project: the Mammalian Gene Collection (MGC).</title>
        <authorList>
            <consortium name="The MGC Project Team"/>
        </authorList>
    </citation>
    <scope>NUCLEOTIDE SEQUENCE [LARGE SCALE MRNA]</scope>
</reference>
<reference key="5">
    <citation type="journal article" date="1994" name="Genomics">
        <title>Cloning of human genes encoding novel G protein-coupled receptors.</title>
        <authorList>
            <person name="Marchese A."/>
            <person name="Docherty J.M."/>
            <person name="Nguyen T."/>
            <person name="Heiber M."/>
            <person name="Cheng R."/>
            <person name="Heng H.H.Q."/>
            <person name="Tsui L.-C."/>
            <person name="Shi X."/>
            <person name="George S.R."/>
            <person name="O'Dowd B.F."/>
        </authorList>
    </citation>
    <scope>NUCLEOTIDE SEQUENCE [GENOMIC DNA] OF 9-362</scope>
</reference>
<reference key="6">
    <citation type="journal article" date="2000" name="J. Biol. Chem.">
        <title>Identification of a novel chemokine (CCL28), which binds CCR10 (GPR2).</title>
        <authorList>
            <person name="Wang W."/>
            <person name="Soto H."/>
            <person name="Oldham E.R."/>
            <person name="Buchanan M.E."/>
            <person name="Homey B."/>
            <person name="Catron D."/>
            <person name="Jenkins N."/>
            <person name="Copeland N.G."/>
            <person name="Gilbert D.J."/>
            <person name="Nguyen N."/>
            <person name="Abrams J."/>
            <person name="Kershenovich D."/>
            <person name="Smith K."/>
            <person name="McClanahan T."/>
            <person name="Vicari A.P."/>
            <person name="Zlotnik A."/>
        </authorList>
    </citation>
    <scope>LIGAND-BINDING</scope>
    <scope>TISSUE SPECIFICITY</scope>
</reference>
<reference key="7">
    <citation type="journal article" date="2000" name="J. Immunol.">
        <title>A novel chemokine ligand for CCR10 and CCR3 expressed by epithelial cells in mucosal tissues.</title>
        <authorList>
            <person name="Pan J."/>
            <person name="Kunkel E.J."/>
            <person name="Gosslar U."/>
            <person name="Lazarus N."/>
            <person name="Langdon P."/>
            <person name="Broadwell K."/>
            <person name="Vierra M.A."/>
            <person name="Genovese M.C."/>
            <person name="Butcher E.C."/>
            <person name="Soler D."/>
        </authorList>
    </citation>
    <scope>LIGAND-BINDING</scope>
</reference>